<protein>
    <recommendedName>
        <fullName evidence="1">tRNA pseudouridine synthase B</fullName>
        <ecNumber evidence="1">5.4.99.25</ecNumber>
    </recommendedName>
    <alternativeName>
        <fullName evidence="1">tRNA pseudouridine(55) synthase</fullName>
        <shortName evidence="1">Psi55 synthase</shortName>
    </alternativeName>
    <alternativeName>
        <fullName evidence="1">tRNA pseudouridylate synthase</fullName>
    </alternativeName>
    <alternativeName>
        <fullName evidence="1">tRNA-uridine isomerase</fullName>
    </alternativeName>
</protein>
<sequence length="316" mass="35118">MARRRKGRPIDGVILLDKPTGITSNDTLQKVKRIFFAQKAGHTGALDPLATGMLPICFGEATKFSQFLLDSDKRYRVIAKLGERTNTSDSDGEVVETREVKVDRGQLERCIAKFRGTTDQIPSMFSALKYQGRPLYEYAREGIEIPRESRKITVHSIELLRFEGHEVEMEVHCSKGTYIRTITDDLGEMLGCGAHVVYLRRTGVSDYPMENVVTLEQLQALRDQAIEQGIEPGELLDPLLLPTDSAVQDLPEANVTVEGGDAILHGQPVKASQLPEQGTLVRITVGEQRDFIGIGEIDQNNMVAPKRVMANKQDEA</sequence>
<evidence type="ECO:0000255" key="1">
    <source>
        <dbReference type="HAMAP-Rule" id="MF_01080"/>
    </source>
</evidence>
<feature type="chain" id="PRO_0000121883" description="tRNA pseudouridine synthase B">
    <location>
        <begin position="1"/>
        <end position="316"/>
    </location>
</feature>
<feature type="active site" description="Nucleophile" evidence="1">
    <location>
        <position position="47"/>
    </location>
</feature>
<dbReference type="EC" id="5.4.99.25" evidence="1"/>
<dbReference type="EMBL" id="CR378664">
    <property type="protein sequence ID" value="CAG19035.1"/>
    <property type="molecule type" value="Genomic_DNA"/>
</dbReference>
<dbReference type="RefSeq" id="WP_011217384.1">
    <property type="nucleotide sequence ID" value="NC_006370.1"/>
</dbReference>
<dbReference type="SMR" id="Q6LUJ0"/>
<dbReference type="STRING" id="298386.PBPRA0614"/>
<dbReference type="KEGG" id="ppr:PBPRA0614"/>
<dbReference type="eggNOG" id="COG0130">
    <property type="taxonomic scope" value="Bacteria"/>
</dbReference>
<dbReference type="HOGENOM" id="CLU_032087_0_3_6"/>
<dbReference type="Proteomes" id="UP000000593">
    <property type="component" value="Chromosome 1"/>
</dbReference>
<dbReference type="GO" id="GO:0003723">
    <property type="term" value="F:RNA binding"/>
    <property type="evidence" value="ECO:0007669"/>
    <property type="project" value="InterPro"/>
</dbReference>
<dbReference type="GO" id="GO:0160148">
    <property type="term" value="F:tRNA pseudouridine(55) synthase activity"/>
    <property type="evidence" value="ECO:0007669"/>
    <property type="project" value="UniProtKB-EC"/>
</dbReference>
<dbReference type="GO" id="GO:1990481">
    <property type="term" value="P:mRNA pseudouridine synthesis"/>
    <property type="evidence" value="ECO:0007669"/>
    <property type="project" value="TreeGrafter"/>
</dbReference>
<dbReference type="GO" id="GO:0031119">
    <property type="term" value="P:tRNA pseudouridine synthesis"/>
    <property type="evidence" value="ECO:0007669"/>
    <property type="project" value="UniProtKB-UniRule"/>
</dbReference>
<dbReference type="CDD" id="cd02573">
    <property type="entry name" value="PseudoU_synth_EcTruB"/>
    <property type="match status" value="1"/>
</dbReference>
<dbReference type="CDD" id="cd21152">
    <property type="entry name" value="PUA_TruB_bacterial"/>
    <property type="match status" value="1"/>
</dbReference>
<dbReference type="FunFam" id="3.30.2350.10:FF:000003">
    <property type="entry name" value="tRNA pseudouridine synthase B"/>
    <property type="match status" value="1"/>
</dbReference>
<dbReference type="Gene3D" id="3.30.2350.10">
    <property type="entry name" value="Pseudouridine synthase"/>
    <property type="match status" value="1"/>
</dbReference>
<dbReference type="Gene3D" id="2.30.130.10">
    <property type="entry name" value="PUA domain"/>
    <property type="match status" value="1"/>
</dbReference>
<dbReference type="HAMAP" id="MF_01080">
    <property type="entry name" value="TruB_bact"/>
    <property type="match status" value="1"/>
</dbReference>
<dbReference type="InterPro" id="IPR020103">
    <property type="entry name" value="PsdUridine_synth_cat_dom_sf"/>
</dbReference>
<dbReference type="InterPro" id="IPR002501">
    <property type="entry name" value="PsdUridine_synth_N"/>
</dbReference>
<dbReference type="InterPro" id="IPR015947">
    <property type="entry name" value="PUA-like_sf"/>
</dbReference>
<dbReference type="InterPro" id="IPR036974">
    <property type="entry name" value="PUA_sf"/>
</dbReference>
<dbReference type="InterPro" id="IPR014780">
    <property type="entry name" value="tRNA_psdUridine_synth_TruB"/>
</dbReference>
<dbReference type="InterPro" id="IPR015240">
    <property type="entry name" value="tRNA_sdUridine_synth_fam1_C"/>
</dbReference>
<dbReference type="InterPro" id="IPR032819">
    <property type="entry name" value="TruB_C"/>
</dbReference>
<dbReference type="NCBIfam" id="TIGR00431">
    <property type="entry name" value="TruB"/>
    <property type="match status" value="1"/>
</dbReference>
<dbReference type="PANTHER" id="PTHR13767:SF2">
    <property type="entry name" value="PSEUDOURIDYLATE SYNTHASE TRUB1"/>
    <property type="match status" value="1"/>
</dbReference>
<dbReference type="PANTHER" id="PTHR13767">
    <property type="entry name" value="TRNA-PSEUDOURIDINE SYNTHASE"/>
    <property type="match status" value="1"/>
</dbReference>
<dbReference type="Pfam" id="PF09157">
    <property type="entry name" value="TruB-C_2"/>
    <property type="match status" value="1"/>
</dbReference>
<dbReference type="Pfam" id="PF16198">
    <property type="entry name" value="TruB_C_2"/>
    <property type="match status" value="1"/>
</dbReference>
<dbReference type="Pfam" id="PF01509">
    <property type="entry name" value="TruB_N"/>
    <property type="match status" value="1"/>
</dbReference>
<dbReference type="SUPFAM" id="SSF55120">
    <property type="entry name" value="Pseudouridine synthase"/>
    <property type="match status" value="1"/>
</dbReference>
<dbReference type="SUPFAM" id="SSF88697">
    <property type="entry name" value="PUA domain-like"/>
    <property type="match status" value="1"/>
</dbReference>
<reference key="1">
    <citation type="journal article" date="2005" name="Science">
        <title>Life at depth: Photobacterium profundum genome sequence and expression analysis.</title>
        <authorList>
            <person name="Vezzi A."/>
            <person name="Campanaro S."/>
            <person name="D'Angelo M."/>
            <person name="Simonato F."/>
            <person name="Vitulo N."/>
            <person name="Lauro F.M."/>
            <person name="Cestaro A."/>
            <person name="Malacrida G."/>
            <person name="Simionati B."/>
            <person name="Cannata N."/>
            <person name="Romualdi C."/>
            <person name="Bartlett D.H."/>
            <person name="Valle G."/>
        </authorList>
    </citation>
    <scope>NUCLEOTIDE SEQUENCE [LARGE SCALE GENOMIC DNA]</scope>
    <source>
        <strain>ATCC BAA-1253 / SS9</strain>
    </source>
</reference>
<proteinExistence type="inferred from homology"/>
<keyword id="KW-0413">Isomerase</keyword>
<keyword id="KW-1185">Reference proteome</keyword>
<keyword id="KW-0819">tRNA processing</keyword>
<comment type="function">
    <text evidence="1">Responsible for synthesis of pseudouridine from uracil-55 in the psi GC loop of transfer RNAs.</text>
</comment>
<comment type="catalytic activity">
    <reaction evidence="1">
        <text>uridine(55) in tRNA = pseudouridine(55) in tRNA</text>
        <dbReference type="Rhea" id="RHEA:42532"/>
        <dbReference type="Rhea" id="RHEA-COMP:10101"/>
        <dbReference type="Rhea" id="RHEA-COMP:10102"/>
        <dbReference type="ChEBI" id="CHEBI:65314"/>
        <dbReference type="ChEBI" id="CHEBI:65315"/>
        <dbReference type="EC" id="5.4.99.25"/>
    </reaction>
</comment>
<comment type="similarity">
    <text evidence="1">Belongs to the pseudouridine synthase TruB family. Type 1 subfamily.</text>
</comment>
<name>TRUB_PHOPR</name>
<gene>
    <name evidence="1" type="primary">truB</name>
    <name type="ordered locus">PBPRA0614</name>
</gene>
<accession>Q6LUJ0</accession>
<organism>
    <name type="scientific">Photobacterium profundum (strain SS9)</name>
    <dbReference type="NCBI Taxonomy" id="298386"/>
    <lineage>
        <taxon>Bacteria</taxon>
        <taxon>Pseudomonadati</taxon>
        <taxon>Pseudomonadota</taxon>
        <taxon>Gammaproteobacteria</taxon>
        <taxon>Vibrionales</taxon>
        <taxon>Vibrionaceae</taxon>
        <taxon>Photobacterium</taxon>
    </lineage>
</organism>